<sequence length="45" mass="5253">MSKRTFQPSVLKRKRTHGFRARMATANGRKVLNARRAKGRKRLSK</sequence>
<feature type="chain" id="PRO_1000196138" description="Large ribosomal subunit protein bL34">
    <location>
        <begin position="1"/>
        <end position="45"/>
    </location>
</feature>
<gene>
    <name evidence="1" type="primary">rpmH</name>
    <name type="ordered locus">VCM66_0007</name>
</gene>
<dbReference type="EMBL" id="CP001233">
    <property type="protein sequence ID" value="ACP04344.1"/>
    <property type="molecule type" value="Genomic_DNA"/>
</dbReference>
<dbReference type="RefSeq" id="WP_000044781.1">
    <property type="nucleotide sequence ID" value="NC_012578.1"/>
</dbReference>
<dbReference type="SMR" id="C3LP80"/>
<dbReference type="GeneID" id="94015086"/>
<dbReference type="KEGG" id="vcm:VCM66_0007"/>
<dbReference type="HOGENOM" id="CLU_129938_2_0_6"/>
<dbReference type="Proteomes" id="UP000001217">
    <property type="component" value="Chromosome I"/>
</dbReference>
<dbReference type="GO" id="GO:1990904">
    <property type="term" value="C:ribonucleoprotein complex"/>
    <property type="evidence" value="ECO:0007669"/>
    <property type="project" value="UniProtKB-KW"/>
</dbReference>
<dbReference type="GO" id="GO:0005840">
    <property type="term" value="C:ribosome"/>
    <property type="evidence" value="ECO:0007669"/>
    <property type="project" value="UniProtKB-KW"/>
</dbReference>
<dbReference type="GO" id="GO:0003735">
    <property type="term" value="F:structural constituent of ribosome"/>
    <property type="evidence" value="ECO:0007669"/>
    <property type="project" value="InterPro"/>
</dbReference>
<dbReference type="GO" id="GO:0006412">
    <property type="term" value="P:translation"/>
    <property type="evidence" value="ECO:0007669"/>
    <property type="project" value="UniProtKB-UniRule"/>
</dbReference>
<dbReference type="FunFam" id="1.10.287.3980:FF:000001">
    <property type="entry name" value="Mitochondrial ribosomal protein L34"/>
    <property type="match status" value="1"/>
</dbReference>
<dbReference type="Gene3D" id="1.10.287.3980">
    <property type="match status" value="1"/>
</dbReference>
<dbReference type="HAMAP" id="MF_00391">
    <property type="entry name" value="Ribosomal_bL34"/>
    <property type="match status" value="1"/>
</dbReference>
<dbReference type="InterPro" id="IPR000271">
    <property type="entry name" value="Ribosomal_bL34"/>
</dbReference>
<dbReference type="InterPro" id="IPR020939">
    <property type="entry name" value="Ribosomal_bL34_CS"/>
</dbReference>
<dbReference type="NCBIfam" id="TIGR01030">
    <property type="entry name" value="rpmH_bact"/>
    <property type="match status" value="1"/>
</dbReference>
<dbReference type="PANTHER" id="PTHR14503:SF4">
    <property type="entry name" value="LARGE RIBOSOMAL SUBUNIT PROTEIN BL34M"/>
    <property type="match status" value="1"/>
</dbReference>
<dbReference type="PANTHER" id="PTHR14503">
    <property type="entry name" value="MITOCHONDRIAL RIBOSOMAL PROTEIN 34 FAMILY MEMBER"/>
    <property type="match status" value="1"/>
</dbReference>
<dbReference type="Pfam" id="PF00468">
    <property type="entry name" value="Ribosomal_L34"/>
    <property type="match status" value="1"/>
</dbReference>
<dbReference type="PROSITE" id="PS00784">
    <property type="entry name" value="RIBOSOMAL_L34"/>
    <property type="match status" value="1"/>
</dbReference>
<evidence type="ECO:0000255" key="1">
    <source>
        <dbReference type="HAMAP-Rule" id="MF_00391"/>
    </source>
</evidence>
<evidence type="ECO:0000305" key="2"/>
<keyword id="KW-0687">Ribonucleoprotein</keyword>
<keyword id="KW-0689">Ribosomal protein</keyword>
<reference key="1">
    <citation type="journal article" date="2008" name="PLoS ONE">
        <title>A recalibrated molecular clock and independent origins for the cholera pandemic clones.</title>
        <authorList>
            <person name="Feng L."/>
            <person name="Reeves P.R."/>
            <person name="Lan R."/>
            <person name="Ren Y."/>
            <person name="Gao C."/>
            <person name="Zhou Z."/>
            <person name="Ren Y."/>
            <person name="Cheng J."/>
            <person name="Wang W."/>
            <person name="Wang J."/>
            <person name="Qian W."/>
            <person name="Li D."/>
            <person name="Wang L."/>
        </authorList>
    </citation>
    <scope>NUCLEOTIDE SEQUENCE [LARGE SCALE GENOMIC DNA]</scope>
    <source>
        <strain>M66-2</strain>
    </source>
</reference>
<organism>
    <name type="scientific">Vibrio cholerae serotype O1 (strain M66-2)</name>
    <dbReference type="NCBI Taxonomy" id="579112"/>
    <lineage>
        <taxon>Bacteria</taxon>
        <taxon>Pseudomonadati</taxon>
        <taxon>Pseudomonadota</taxon>
        <taxon>Gammaproteobacteria</taxon>
        <taxon>Vibrionales</taxon>
        <taxon>Vibrionaceae</taxon>
        <taxon>Vibrio</taxon>
    </lineage>
</organism>
<proteinExistence type="inferred from homology"/>
<protein>
    <recommendedName>
        <fullName evidence="1">Large ribosomal subunit protein bL34</fullName>
    </recommendedName>
    <alternativeName>
        <fullName evidence="2">50S ribosomal protein L34</fullName>
    </alternativeName>
</protein>
<comment type="similarity">
    <text evidence="1">Belongs to the bacterial ribosomal protein bL34 family.</text>
</comment>
<accession>C3LP80</accession>
<name>RL34_VIBCM</name>